<organism>
    <name type="scientific">Buchnera aphidicola subsp. Schizaphis graminum (strain Sg)</name>
    <dbReference type="NCBI Taxonomy" id="198804"/>
    <lineage>
        <taxon>Bacteria</taxon>
        <taxon>Pseudomonadati</taxon>
        <taxon>Pseudomonadota</taxon>
        <taxon>Gammaproteobacteria</taxon>
        <taxon>Enterobacterales</taxon>
        <taxon>Erwiniaceae</taxon>
        <taxon>Buchnera</taxon>
    </lineage>
</organism>
<accession>Q8K9U7</accession>
<feature type="chain" id="PRO_0000128213" description="Pantothenate synthetase">
    <location>
        <begin position="1"/>
        <end position="285"/>
    </location>
</feature>
<feature type="active site" description="Proton donor" evidence="1">
    <location>
        <position position="37"/>
    </location>
</feature>
<feature type="binding site" evidence="1">
    <location>
        <begin position="30"/>
        <end position="37"/>
    </location>
    <ligand>
        <name>ATP</name>
        <dbReference type="ChEBI" id="CHEBI:30616"/>
    </ligand>
</feature>
<feature type="binding site" evidence="1">
    <location>
        <position position="61"/>
    </location>
    <ligand>
        <name>(R)-pantoate</name>
        <dbReference type="ChEBI" id="CHEBI:15980"/>
    </ligand>
</feature>
<feature type="binding site" evidence="1">
    <location>
        <position position="61"/>
    </location>
    <ligand>
        <name>beta-alanine</name>
        <dbReference type="ChEBI" id="CHEBI:57966"/>
    </ligand>
</feature>
<feature type="binding site" evidence="1">
    <location>
        <begin position="149"/>
        <end position="152"/>
    </location>
    <ligand>
        <name>ATP</name>
        <dbReference type="ChEBI" id="CHEBI:30616"/>
    </ligand>
</feature>
<feature type="binding site" evidence="1">
    <location>
        <position position="155"/>
    </location>
    <ligand>
        <name>(R)-pantoate</name>
        <dbReference type="ChEBI" id="CHEBI:15980"/>
    </ligand>
</feature>
<feature type="binding site" evidence="1">
    <location>
        <position position="178"/>
    </location>
    <ligand>
        <name>ATP</name>
        <dbReference type="ChEBI" id="CHEBI:30616"/>
    </ligand>
</feature>
<feature type="binding site" evidence="1">
    <location>
        <begin position="186"/>
        <end position="189"/>
    </location>
    <ligand>
        <name>ATP</name>
        <dbReference type="ChEBI" id="CHEBI:30616"/>
    </ligand>
</feature>
<reference key="1">
    <citation type="journal article" date="2002" name="Science">
        <title>50 million years of genomic stasis in endosymbiotic bacteria.</title>
        <authorList>
            <person name="Tamas I."/>
            <person name="Klasson L."/>
            <person name="Canbaeck B."/>
            <person name="Naeslund A.K."/>
            <person name="Eriksson A.-S."/>
            <person name="Wernegreen J.J."/>
            <person name="Sandstroem J.P."/>
            <person name="Moran N.A."/>
            <person name="Andersson S.G.E."/>
        </authorList>
    </citation>
    <scope>NUCLEOTIDE SEQUENCE [LARGE SCALE GENOMIC DNA]</scope>
    <source>
        <strain>Sg</strain>
    </source>
</reference>
<evidence type="ECO:0000255" key="1">
    <source>
        <dbReference type="HAMAP-Rule" id="MF_00158"/>
    </source>
</evidence>
<dbReference type="EC" id="6.3.2.1" evidence="1"/>
<dbReference type="EMBL" id="AE013218">
    <property type="protein sequence ID" value="AAM67755.1"/>
    <property type="molecule type" value="Genomic_DNA"/>
</dbReference>
<dbReference type="RefSeq" id="WP_011053722.1">
    <property type="nucleotide sequence ID" value="NC_004061.1"/>
</dbReference>
<dbReference type="SMR" id="Q8K9U7"/>
<dbReference type="STRING" id="198804.BUsg_190"/>
<dbReference type="GeneID" id="93003658"/>
<dbReference type="KEGG" id="bas:BUsg_190"/>
<dbReference type="eggNOG" id="COG0414">
    <property type="taxonomic scope" value="Bacteria"/>
</dbReference>
<dbReference type="HOGENOM" id="CLU_047148_0_0_6"/>
<dbReference type="UniPathway" id="UPA00028">
    <property type="reaction ID" value="UER00005"/>
</dbReference>
<dbReference type="Proteomes" id="UP000000416">
    <property type="component" value="Chromosome"/>
</dbReference>
<dbReference type="GO" id="GO:0005829">
    <property type="term" value="C:cytosol"/>
    <property type="evidence" value="ECO:0007669"/>
    <property type="project" value="TreeGrafter"/>
</dbReference>
<dbReference type="GO" id="GO:0005524">
    <property type="term" value="F:ATP binding"/>
    <property type="evidence" value="ECO:0007669"/>
    <property type="project" value="UniProtKB-KW"/>
</dbReference>
<dbReference type="GO" id="GO:0004592">
    <property type="term" value="F:pantoate-beta-alanine ligase activity"/>
    <property type="evidence" value="ECO:0007669"/>
    <property type="project" value="UniProtKB-UniRule"/>
</dbReference>
<dbReference type="GO" id="GO:0015940">
    <property type="term" value="P:pantothenate biosynthetic process"/>
    <property type="evidence" value="ECO:0007669"/>
    <property type="project" value="UniProtKB-UniRule"/>
</dbReference>
<dbReference type="CDD" id="cd00560">
    <property type="entry name" value="PanC"/>
    <property type="match status" value="1"/>
</dbReference>
<dbReference type="FunFam" id="3.40.50.620:FF:000013">
    <property type="entry name" value="Pantothenate synthetase"/>
    <property type="match status" value="1"/>
</dbReference>
<dbReference type="Gene3D" id="3.40.50.620">
    <property type="entry name" value="HUPs"/>
    <property type="match status" value="1"/>
</dbReference>
<dbReference type="Gene3D" id="3.30.1300.10">
    <property type="entry name" value="Pantoate-beta-alanine ligase, C-terminal domain"/>
    <property type="match status" value="1"/>
</dbReference>
<dbReference type="HAMAP" id="MF_00158">
    <property type="entry name" value="PanC"/>
    <property type="match status" value="1"/>
</dbReference>
<dbReference type="InterPro" id="IPR003721">
    <property type="entry name" value="Pantoate_ligase"/>
</dbReference>
<dbReference type="InterPro" id="IPR042176">
    <property type="entry name" value="Pantoate_ligase_C"/>
</dbReference>
<dbReference type="InterPro" id="IPR014729">
    <property type="entry name" value="Rossmann-like_a/b/a_fold"/>
</dbReference>
<dbReference type="NCBIfam" id="TIGR00018">
    <property type="entry name" value="panC"/>
    <property type="match status" value="1"/>
</dbReference>
<dbReference type="PANTHER" id="PTHR21299">
    <property type="entry name" value="CYTIDYLATE KINASE/PANTOATE-BETA-ALANINE LIGASE"/>
    <property type="match status" value="1"/>
</dbReference>
<dbReference type="PANTHER" id="PTHR21299:SF1">
    <property type="entry name" value="PANTOATE--BETA-ALANINE LIGASE"/>
    <property type="match status" value="1"/>
</dbReference>
<dbReference type="Pfam" id="PF02569">
    <property type="entry name" value="Pantoate_ligase"/>
    <property type="match status" value="1"/>
</dbReference>
<dbReference type="SUPFAM" id="SSF52374">
    <property type="entry name" value="Nucleotidylyl transferase"/>
    <property type="match status" value="1"/>
</dbReference>
<sequence>MNIIKNINLLEKKIKELKKKNKIIGLVPTMGNLHDGHIKLILLAKKNVDIVIVSIFINPMQFEDLLDLKKYPKTFEQDCCILKQEKVEILFCPDVNEMYPLGLKNHTYIDVPKLSKIIEGKVRPGHFIGVTTIVCKLFNLIQPNFSFFGEKDYQQLLIIKKLVKELNYPIKIISLPIIRLKNGLAFSSRNKHLSDLAQQKASYLYQAIKQTCNFIKNNNGKNIKKNIHTSRKYLIKKGFYIDIFNAYDSKTLDPISKDSKNIIIIASVWLGKIRLIDNKKIILRD</sequence>
<proteinExistence type="inferred from homology"/>
<keyword id="KW-0067">ATP-binding</keyword>
<keyword id="KW-0963">Cytoplasm</keyword>
<keyword id="KW-0436">Ligase</keyword>
<keyword id="KW-0547">Nucleotide-binding</keyword>
<keyword id="KW-0566">Pantothenate biosynthesis</keyword>
<comment type="function">
    <text evidence="1">Catalyzes the condensation of pantoate with beta-alanine in an ATP-dependent reaction via a pantoyl-adenylate intermediate.</text>
</comment>
<comment type="catalytic activity">
    <reaction evidence="1">
        <text>(R)-pantoate + beta-alanine + ATP = (R)-pantothenate + AMP + diphosphate + H(+)</text>
        <dbReference type="Rhea" id="RHEA:10912"/>
        <dbReference type="ChEBI" id="CHEBI:15378"/>
        <dbReference type="ChEBI" id="CHEBI:15980"/>
        <dbReference type="ChEBI" id="CHEBI:29032"/>
        <dbReference type="ChEBI" id="CHEBI:30616"/>
        <dbReference type="ChEBI" id="CHEBI:33019"/>
        <dbReference type="ChEBI" id="CHEBI:57966"/>
        <dbReference type="ChEBI" id="CHEBI:456215"/>
        <dbReference type="EC" id="6.3.2.1"/>
    </reaction>
</comment>
<comment type="pathway">
    <text evidence="1">Cofactor biosynthesis; (R)-pantothenate biosynthesis; (R)-pantothenate from (R)-pantoate and beta-alanine: step 1/1.</text>
</comment>
<comment type="subunit">
    <text evidence="1">Homodimer.</text>
</comment>
<comment type="subcellular location">
    <subcellularLocation>
        <location evidence="1">Cytoplasm</location>
    </subcellularLocation>
</comment>
<comment type="miscellaneous">
    <text evidence="1">The reaction proceeds by a bi uni uni bi ping pong mechanism.</text>
</comment>
<comment type="similarity">
    <text evidence="1">Belongs to the pantothenate synthetase family.</text>
</comment>
<name>PANC_BUCAP</name>
<protein>
    <recommendedName>
        <fullName evidence="1">Pantothenate synthetase</fullName>
        <shortName evidence="1">PS</shortName>
        <ecNumber evidence="1">6.3.2.1</ecNumber>
    </recommendedName>
    <alternativeName>
        <fullName evidence="1">Pantoate--beta-alanine ligase</fullName>
    </alternativeName>
    <alternativeName>
        <fullName evidence="1">Pantoate-activating enzyme</fullName>
    </alternativeName>
</protein>
<gene>
    <name evidence="1" type="primary">panC</name>
    <name type="ordered locus">BUsg_190</name>
</gene>